<evidence type="ECO:0000255" key="1">
    <source>
        <dbReference type="HAMAP-Rule" id="MF_01579"/>
    </source>
</evidence>
<proteinExistence type="inferred from homology"/>
<protein>
    <recommendedName>
        <fullName evidence="1">Ribosomal RNA small subunit methyltransferase F</fullName>
        <ecNumber evidence="1">2.1.1.178</ecNumber>
    </recommendedName>
    <alternativeName>
        <fullName evidence="1">16S rRNA m5C1407 methyltransferase</fullName>
    </alternativeName>
    <alternativeName>
        <fullName evidence="1">rRNA (cytosine-C(5)-)-methyltransferase RsmF</fullName>
    </alternativeName>
</protein>
<accession>C4ZZJ2</accession>
<keyword id="KW-0963">Cytoplasm</keyword>
<keyword id="KW-0489">Methyltransferase</keyword>
<keyword id="KW-0694">RNA-binding</keyword>
<keyword id="KW-0698">rRNA processing</keyword>
<keyword id="KW-0949">S-adenosyl-L-methionine</keyword>
<keyword id="KW-0808">Transferase</keyword>
<gene>
    <name evidence="1" type="primary">rsmF</name>
    <name type="ordered locus">BWG_1649</name>
</gene>
<sequence>MAQHTVYFPDAFLTQMREAMPSTLSFDDFLAACQRPLRRSIRVNTLKISVADFLQLTAPYGWTLTPIPWCEEGFWIERDNEDALPLGSTAEHLSGLFYIQEASSMLPVAALFADGNAPQRVMDVAAAPGSKTTQISARMNNEGAILANEFSASRVKVLHANISRCGISNVALTHFDGRVFGAAVPEMFDAILLDAPCSGEGVVRKDPDALKNWSPESNQEIAATQRELIDSAFHALRPGGTLVYSTCTLNQEENEAVCLWLKETYPDAVEFLPLGDLFPGANKALTEEGFLHVFPQIYDCEGFFVARLRKTQAIPALPAPKYKVGNFPFSPVKDREAGQIRQAATGVGLNWDENLRLWQRDKELWLFPVGIEALIGKVRFSRLGIKLAETHNKGYRWQHEAVIALASPDNMNAFELTPQEAEEWYRGRDVYPQAAPVADDVLVTFQHQPIGLAKRIGSRLKNSYPRELVRDGKLFTGNA</sequence>
<dbReference type="EC" id="2.1.1.178" evidence="1"/>
<dbReference type="EMBL" id="CP001396">
    <property type="protein sequence ID" value="ACR64666.1"/>
    <property type="molecule type" value="Genomic_DNA"/>
</dbReference>
<dbReference type="RefSeq" id="WP_001352260.1">
    <property type="nucleotide sequence ID" value="NC_012759.1"/>
</dbReference>
<dbReference type="SMR" id="C4ZZJ2"/>
<dbReference type="KEGG" id="ebw:BWG_1649"/>
<dbReference type="HOGENOM" id="CLU_005316_6_2_6"/>
<dbReference type="GO" id="GO:0005737">
    <property type="term" value="C:cytoplasm"/>
    <property type="evidence" value="ECO:0007669"/>
    <property type="project" value="UniProtKB-SubCell"/>
</dbReference>
<dbReference type="GO" id="GO:0003723">
    <property type="term" value="F:RNA binding"/>
    <property type="evidence" value="ECO:0007669"/>
    <property type="project" value="UniProtKB-KW"/>
</dbReference>
<dbReference type="GO" id="GO:0009383">
    <property type="term" value="F:rRNA (cytosine-C5-)-methyltransferase activity"/>
    <property type="evidence" value="ECO:0007669"/>
    <property type="project" value="TreeGrafter"/>
</dbReference>
<dbReference type="GO" id="GO:0070475">
    <property type="term" value="P:rRNA base methylation"/>
    <property type="evidence" value="ECO:0007669"/>
    <property type="project" value="TreeGrafter"/>
</dbReference>
<dbReference type="CDD" id="cd02440">
    <property type="entry name" value="AdoMet_MTases"/>
    <property type="match status" value="1"/>
</dbReference>
<dbReference type="FunFam" id="3.10.450.720:FF:000001">
    <property type="entry name" value="Ribosomal RNA small subunit methyltransferase F"/>
    <property type="match status" value="1"/>
</dbReference>
<dbReference type="FunFam" id="3.40.50.150:FF:000079">
    <property type="entry name" value="Ribosomal RNA small subunit methyltransferase F"/>
    <property type="match status" value="1"/>
</dbReference>
<dbReference type="Gene3D" id="3.10.450.720">
    <property type="match status" value="1"/>
</dbReference>
<dbReference type="Gene3D" id="3.40.50.150">
    <property type="entry name" value="Vaccinia Virus protein VP39"/>
    <property type="match status" value="1"/>
</dbReference>
<dbReference type="HAMAP" id="MF_01579">
    <property type="entry name" value="16SrRNA_methyltr_F"/>
    <property type="match status" value="1"/>
</dbReference>
<dbReference type="InterPro" id="IPR031341">
    <property type="entry name" value="Methyltr_RsmF_N"/>
</dbReference>
<dbReference type="InterPro" id="IPR049560">
    <property type="entry name" value="MeTrfase_RsmB-F_NOP2_cat"/>
</dbReference>
<dbReference type="InterPro" id="IPR001678">
    <property type="entry name" value="MeTrfase_RsmB-F_NOP2_dom"/>
</dbReference>
<dbReference type="InterPro" id="IPR027391">
    <property type="entry name" value="Nol1_Nop2_Fmu_2"/>
</dbReference>
<dbReference type="InterPro" id="IPR011023">
    <property type="entry name" value="Nop2p"/>
</dbReference>
<dbReference type="InterPro" id="IPR023267">
    <property type="entry name" value="RCMT"/>
</dbReference>
<dbReference type="InterPro" id="IPR023545">
    <property type="entry name" value="rRNA_ssu_MeTfrase_F"/>
</dbReference>
<dbReference type="InterPro" id="IPR018314">
    <property type="entry name" value="RsmB/NOL1/NOP2-like_CS"/>
</dbReference>
<dbReference type="InterPro" id="IPR029063">
    <property type="entry name" value="SAM-dependent_MTases_sf"/>
</dbReference>
<dbReference type="InterPro" id="IPR048457">
    <property type="entry name" value="YebU_pre-PUA_dom"/>
</dbReference>
<dbReference type="NCBIfam" id="TIGR00446">
    <property type="entry name" value="nop2p"/>
    <property type="match status" value="1"/>
</dbReference>
<dbReference type="NCBIfam" id="NF008898">
    <property type="entry name" value="PRK11933.1"/>
    <property type="match status" value="1"/>
</dbReference>
<dbReference type="PANTHER" id="PTHR22807:SF30">
    <property type="entry name" value="28S RRNA (CYTOSINE(4447)-C(5))-METHYLTRANSFERASE-RELATED"/>
    <property type="match status" value="1"/>
</dbReference>
<dbReference type="PANTHER" id="PTHR22807">
    <property type="entry name" value="NOP2 YEAST -RELATED NOL1/NOP2/FMU SUN DOMAIN-CONTAINING"/>
    <property type="match status" value="1"/>
</dbReference>
<dbReference type="Pfam" id="PF01189">
    <property type="entry name" value="Methyltr_RsmB-F"/>
    <property type="match status" value="1"/>
</dbReference>
<dbReference type="Pfam" id="PF17125">
    <property type="entry name" value="Methyltr_RsmF_N"/>
    <property type="match status" value="1"/>
</dbReference>
<dbReference type="Pfam" id="PF13636">
    <property type="entry name" value="Methyltranf_PUA"/>
    <property type="match status" value="1"/>
</dbReference>
<dbReference type="Pfam" id="PF21150">
    <property type="entry name" value="YebU_pre-PUA_dom"/>
    <property type="match status" value="1"/>
</dbReference>
<dbReference type="PRINTS" id="PR02008">
    <property type="entry name" value="RCMTFAMILY"/>
</dbReference>
<dbReference type="SUPFAM" id="SSF53335">
    <property type="entry name" value="S-adenosyl-L-methionine-dependent methyltransferases"/>
    <property type="match status" value="1"/>
</dbReference>
<dbReference type="PROSITE" id="PS01153">
    <property type="entry name" value="NOL1_NOP2_SUN"/>
    <property type="match status" value="1"/>
</dbReference>
<dbReference type="PROSITE" id="PS51686">
    <property type="entry name" value="SAM_MT_RSMB_NOP"/>
    <property type="match status" value="1"/>
</dbReference>
<organism>
    <name type="scientific">Escherichia coli (strain K12 / MC4100 / BW2952)</name>
    <dbReference type="NCBI Taxonomy" id="595496"/>
    <lineage>
        <taxon>Bacteria</taxon>
        <taxon>Pseudomonadati</taxon>
        <taxon>Pseudomonadota</taxon>
        <taxon>Gammaproteobacteria</taxon>
        <taxon>Enterobacterales</taxon>
        <taxon>Enterobacteriaceae</taxon>
        <taxon>Escherichia</taxon>
    </lineage>
</organism>
<feature type="chain" id="PRO_1000215615" description="Ribosomal RNA small subunit methyltransferase F">
    <location>
        <begin position="1"/>
        <end position="479"/>
    </location>
</feature>
<feature type="active site" description="Nucleophile" evidence="1">
    <location>
        <position position="247"/>
    </location>
</feature>
<feature type="binding site" evidence="1">
    <location>
        <begin position="125"/>
        <end position="131"/>
    </location>
    <ligand>
        <name>S-adenosyl-L-methionine</name>
        <dbReference type="ChEBI" id="CHEBI:59789"/>
    </ligand>
</feature>
<feature type="binding site" evidence="1">
    <location>
        <position position="149"/>
    </location>
    <ligand>
        <name>S-adenosyl-L-methionine</name>
        <dbReference type="ChEBI" id="CHEBI:59789"/>
    </ligand>
</feature>
<feature type="binding site" evidence="1">
    <location>
        <position position="176"/>
    </location>
    <ligand>
        <name>S-adenosyl-L-methionine</name>
        <dbReference type="ChEBI" id="CHEBI:59789"/>
    </ligand>
</feature>
<feature type="binding site" evidence="1">
    <location>
        <position position="194"/>
    </location>
    <ligand>
        <name>S-adenosyl-L-methionine</name>
        <dbReference type="ChEBI" id="CHEBI:59789"/>
    </ligand>
</feature>
<comment type="function">
    <text evidence="1">Specifically methylates the cytosine at position 1407 (m5C1407) of 16S rRNA.</text>
</comment>
<comment type="catalytic activity">
    <reaction evidence="1">
        <text>cytidine(1407) in 16S rRNA + S-adenosyl-L-methionine = 5-methylcytidine(1407) in 16S rRNA + S-adenosyl-L-homocysteine + H(+)</text>
        <dbReference type="Rhea" id="RHEA:42756"/>
        <dbReference type="Rhea" id="RHEA-COMP:10223"/>
        <dbReference type="Rhea" id="RHEA-COMP:10224"/>
        <dbReference type="ChEBI" id="CHEBI:15378"/>
        <dbReference type="ChEBI" id="CHEBI:57856"/>
        <dbReference type="ChEBI" id="CHEBI:59789"/>
        <dbReference type="ChEBI" id="CHEBI:74483"/>
        <dbReference type="ChEBI" id="CHEBI:82748"/>
        <dbReference type="EC" id="2.1.1.178"/>
    </reaction>
</comment>
<comment type="subcellular location">
    <subcellularLocation>
        <location evidence="1">Cytoplasm</location>
    </subcellularLocation>
</comment>
<comment type="similarity">
    <text evidence="1">Belongs to the class I-like SAM-binding methyltransferase superfamily. RsmB/NOP family.</text>
</comment>
<reference key="1">
    <citation type="journal article" date="2009" name="J. Bacteriol.">
        <title>Genomic sequencing reveals regulatory mutations and recombinational events in the widely used MC4100 lineage of Escherichia coli K-12.</title>
        <authorList>
            <person name="Ferenci T."/>
            <person name="Zhou Z."/>
            <person name="Betteridge T."/>
            <person name="Ren Y."/>
            <person name="Liu Y."/>
            <person name="Feng L."/>
            <person name="Reeves P.R."/>
            <person name="Wang L."/>
        </authorList>
    </citation>
    <scope>NUCLEOTIDE SEQUENCE [LARGE SCALE GENOMIC DNA]</scope>
    <source>
        <strain>K12 / MC4100 / BW2952</strain>
    </source>
</reference>
<name>RSMF_ECOBW</name>